<reference key="1">
    <citation type="journal article" date="2008" name="BMC Genomics">
        <title>Genome sequence and rapid evolution of the rice pathogen Xanthomonas oryzae pv. oryzae PXO99A.</title>
        <authorList>
            <person name="Salzberg S.L."/>
            <person name="Sommer D.D."/>
            <person name="Schatz M.C."/>
            <person name="Phillippy A.M."/>
            <person name="Rabinowicz P.D."/>
            <person name="Tsuge S."/>
            <person name="Furutani A."/>
            <person name="Ochiai H."/>
            <person name="Delcher A.L."/>
            <person name="Kelley D."/>
            <person name="Madupu R."/>
            <person name="Puiu D."/>
            <person name="Radune D."/>
            <person name="Shumway M."/>
            <person name="Trapnell C."/>
            <person name="Aparna G."/>
            <person name="Jha G."/>
            <person name="Pandey A."/>
            <person name="Patil P.B."/>
            <person name="Ishihara H."/>
            <person name="Meyer D.F."/>
            <person name="Szurek B."/>
            <person name="Verdier V."/>
            <person name="Koebnik R."/>
            <person name="Dow J.M."/>
            <person name="Ryan R.P."/>
            <person name="Hirata H."/>
            <person name="Tsuyumu S."/>
            <person name="Won Lee S."/>
            <person name="Seo Y.-S."/>
            <person name="Sriariyanum M."/>
            <person name="Ronald P.C."/>
            <person name="Sonti R.V."/>
            <person name="Van Sluys M.-A."/>
            <person name="Leach J.E."/>
            <person name="White F.F."/>
            <person name="Bogdanove A.J."/>
        </authorList>
    </citation>
    <scope>NUCLEOTIDE SEQUENCE [LARGE SCALE GENOMIC DNA]</scope>
    <source>
        <strain>PXO99A</strain>
    </source>
</reference>
<feature type="chain" id="PRO_0000355844" description="Large ribosomal subunit protein uL14">
    <location>
        <begin position="1"/>
        <end position="122"/>
    </location>
</feature>
<dbReference type="EMBL" id="CP000967">
    <property type="protein sequence ID" value="ACD57897.1"/>
    <property type="status" value="ALT_INIT"/>
    <property type="molecule type" value="Genomic_DNA"/>
</dbReference>
<dbReference type="RefSeq" id="WP_011260026.1">
    <property type="nucleotide sequence ID" value="NC_010717.2"/>
</dbReference>
<dbReference type="SMR" id="B2SQS0"/>
<dbReference type="GeneID" id="77338703"/>
<dbReference type="KEGG" id="xop:PXO_04511"/>
<dbReference type="eggNOG" id="COG0093">
    <property type="taxonomic scope" value="Bacteria"/>
</dbReference>
<dbReference type="HOGENOM" id="CLU_095071_2_1_6"/>
<dbReference type="Proteomes" id="UP000001740">
    <property type="component" value="Chromosome"/>
</dbReference>
<dbReference type="GO" id="GO:0022625">
    <property type="term" value="C:cytosolic large ribosomal subunit"/>
    <property type="evidence" value="ECO:0007669"/>
    <property type="project" value="TreeGrafter"/>
</dbReference>
<dbReference type="GO" id="GO:0070180">
    <property type="term" value="F:large ribosomal subunit rRNA binding"/>
    <property type="evidence" value="ECO:0007669"/>
    <property type="project" value="TreeGrafter"/>
</dbReference>
<dbReference type="GO" id="GO:0003735">
    <property type="term" value="F:structural constituent of ribosome"/>
    <property type="evidence" value="ECO:0007669"/>
    <property type="project" value="InterPro"/>
</dbReference>
<dbReference type="GO" id="GO:0006412">
    <property type="term" value="P:translation"/>
    <property type="evidence" value="ECO:0007669"/>
    <property type="project" value="UniProtKB-UniRule"/>
</dbReference>
<dbReference type="CDD" id="cd00337">
    <property type="entry name" value="Ribosomal_uL14"/>
    <property type="match status" value="1"/>
</dbReference>
<dbReference type="FunFam" id="2.40.150.20:FF:000001">
    <property type="entry name" value="50S ribosomal protein L14"/>
    <property type="match status" value="1"/>
</dbReference>
<dbReference type="Gene3D" id="2.40.150.20">
    <property type="entry name" value="Ribosomal protein L14"/>
    <property type="match status" value="1"/>
</dbReference>
<dbReference type="HAMAP" id="MF_01367">
    <property type="entry name" value="Ribosomal_uL14"/>
    <property type="match status" value="1"/>
</dbReference>
<dbReference type="InterPro" id="IPR000218">
    <property type="entry name" value="Ribosomal_uL14"/>
</dbReference>
<dbReference type="InterPro" id="IPR005745">
    <property type="entry name" value="Ribosomal_uL14_bac-type"/>
</dbReference>
<dbReference type="InterPro" id="IPR019972">
    <property type="entry name" value="Ribosomal_uL14_CS"/>
</dbReference>
<dbReference type="InterPro" id="IPR036853">
    <property type="entry name" value="Ribosomal_uL14_sf"/>
</dbReference>
<dbReference type="NCBIfam" id="TIGR01067">
    <property type="entry name" value="rplN_bact"/>
    <property type="match status" value="1"/>
</dbReference>
<dbReference type="PANTHER" id="PTHR11761">
    <property type="entry name" value="50S/60S RIBOSOMAL PROTEIN L14/L23"/>
    <property type="match status" value="1"/>
</dbReference>
<dbReference type="PANTHER" id="PTHR11761:SF3">
    <property type="entry name" value="LARGE RIBOSOMAL SUBUNIT PROTEIN UL14M"/>
    <property type="match status" value="1"/>
</dbReference>
<dbReference type="Pfam" id="PF00238">
    <property type="entry name" value="Ribosomal_L14"/>
    <property type="match status" value="1"/>
</dbReference>
<dbReference type="SMART" id="SM01374">
    <property type="entry name" value="Ribosomal_L14"/>
    <property type="match status" value="1"/>
</dbReference>
<dbReference type="SUPFAM" id="SSF50193">
    <property type="entry name" value="Ribosomal protein L14"/>
    <property type="match status" value="1"/>
</dbReference>
<dbReference type="PROSITE" id="PS00049">
    <property type="entry name" value="RIBOSOMAL_L14"/>
    <property type="match status" value="1"/>
</dbReference>
<name>RL14_XANOP</name>
<organism>
    <name type="scientific">Xanthomonas oryzae pv. oryzae (strain PXO99A)</name>
    <dbReference type="NCBI Taxonomy" id="360094"/>
    <lineage>
        <taxon>Bacteria</taxon>
        <taxon>Pseudomonadati</taxon>
        <taxon>Pseudomonadota</taxon>
        <taxon>Gammaproteobacteria</taxon>
        <taxon>Lysobacterales</taxon>
        <taxon>Lysobacteraceae</taxon>
        <taxon>Xanthomonas</taxon>
    </lineage>
</organism>
<accession>B2SQS0</accession>
<comment type="function">
    <text evidence="1">Binds to 23S rRNA. Forms part of two intersubunit bridges in the 70S ribosome.</text>
</comment>
<comment type="subunit">
    <text evidence="1">Part of the 50S ribosomal subunit. Forms a cluster with proteins L3 and L19. In the 70S ribosome, L14 and L19 interact and together make contacts with the 16S rRNA in bridges B5 and B8.</text>
</comment>
<comment type="similarity">
    <text evidence="1">Belongs to the universal ribosomal protein uL14 family.</text>
</comment>
<comment type="sequence caution" evidence="2">
    <conflict type="erroneous initiation">
        <sequence resource="EMBL-CDS" id="ACD57897"/>
    </conflict>
</comment>
<gene>
    <name evidence="1" type="primary">rplN</name>
    <name type="ordered locus">PXO_04511</name>
</gene>
<protein>
    <recommendedName>
        <fullName evidence="1">Large ribosomal subunit protein uL14</fullName>
    </recommendedName>
    <alternativeName>
        <fullName evidence="2">50S ribosomal protein L14</fullName>
    </alternativeName>
</protein>
<keyword id="KW-0687">Ribonucleoprotein</keyword>
<keyword id="KW-0689">Ribosomal protein</keyword>
<keyword id="KW-0694">RNA-binding</keyword>
<keyword id="KW-0699">rRNA-binding</keyword>
<proteinExistence type="inferred from homology"/>
<sequence length="122" mass="13517">MIQMQSYLDVADNSGAKEVMCIKVLGGSKRRYARIGDIIKVTVKDAIPRGKVKKGEVYDAVVVRTRKGVRRADGSLIRFDGNAAVLLNNKQEPIGTRIFGPVTRELRSEKFMKIVSLAPEVL</sequence>
<evidence type="ECO:0000255" key="1">
    <source>
        <dbReference type="HAMAP-Rule" id="MF_01367"/>
    </source>
</evidence>
<evidence type="ECO:0000305" key="2"/>